<protein>
    <recommendedName>
        <fullName evidence="5">Adenylate kinase 2</fullName>
        <shortName evidence="5">PfAK2</shortName>
        <ecNumber evidence="3">2.7.4.3</ecNumber>
    </recommendedName>
</protein>
<dbReference type="EC" id="2.7.4.3" evidence="3"/>
<dbReference type="EMBL" id="AY667503">
    <property type="protein sequence ID" value="AAV83966.1"/>
    <property type="molecule type" value="mRNA"/>
</dbReference>
<dbReference type="EMBL" id="AL844507">
    <property type="protein sequence ID" value="CAD51204.1"/>
    <property type="molecule type" value="Genomic_DNA"/>
</dbReference>
<dbReference type="RefSeq" id="XP_001349355.1">
    <property type="nucleotide sequence ID" value="XM_001349319.1"/>
</dbReference>
<dbReference type="SMR" id="Q8IB06"/>
<dbReference type="FunCoup" id="Q8IB06">
    <property type="interactions" value="89"/>
</dbReference>
<dbReference type="IntAct" id="Q8IB06">
    <property type="interactions" value="2"/>
</dbReference>
<dbReference type="MINT" id="Q8IB06"/>
<dbReference type="STRING" id="36329.Q8IB06"/>
<dbReference type="iPTMnet" id="Q8IB06"/>
<dbReference type="PaxDb" id="5833-PF08_0062"/>
<dbReference type="EnsemblProtists" id="CAD51204">
    <property type="protein sequence ID" value="CAD51204"/>
    <property type="gene ID" value="PF3D7_0816900"/>
</dbReference>
<dbReference type="GeneID" id="2655261"/>
<dbReference type="KEGG" id="pfa:PF3D7_0816900"/>
<dbReference type="VEuPathDB" id="PlasmoDB:PF3D7_0816900"/>
<dbReference type="VEuPathDB" id="PlasmoDB:Pf7G8-2_000232200"/>
<dbReference type="VEuPathDB" id="PlasmoDB:Pf7G8_080022000"/>
<dbReference type="VEuPathDB" id="PlasmoDB:PfCD01_080022500"/>
<dbReference type="VEuPathDB" id="PlasmoDB:PfDd2_080022100"/>
<dbReference type="VEuPathDB" id="PlasmoDB:PfGA01_080020600"/>
<dbReference type="VEuPathDB" id="PlasmoDB:PfGB4_080021700"/>
<dbReference type="VEuPathDB" id="PlasmoDB:PfGN01_080022600"/>
<dbReference type="VEuPathDB" id="PlasmoDB:PfHB3_080022400"/>
<dbReference type="VEuPathDB" id="PlasmoDB:PfIT_080021900"/>
<dbReference type="VEuPathDB" id="PlasmoDB:PfKE01_080022500"/>
<dbReference type="VEuPathDB" id="PlasmoDB:PfKH01_080022000"/>
<dbReference type="VEuPathDB" id="PlasmoDB:PfKH02_080022500"/>
<dbReference type="VEuPathDB" id="PlasmoDB:PfML01_080022500"/>
<dbReference type="VEuPathDB" id="PlasmoDB:PfNF135_000023500"/>
<dbReference type="VEuPathDB" id="PlasmoDB:PfNF166_080020700"/>
<dbReference type="VEuPathDB" id="PlasmoDB:PfNF54_080020700"/>
<dbReference type="VEuPathDB" id="PlasmoDB:PfSD01_080022300"/>
<dbReference type="VEuPathDB" id="PlasmoDB:PfSN01_080021500"/>
<dbReference type="VEuPathDB" id="PlasmoDB:PfTG01_080022800"/>
<dbReference type="HOGENOM" id="CLU_032354_6_1_1"/>
<dbReference type="InParanoid" id="Q8IB06"/>
<dbReference type="OMA" id="ETFAQIC"/>
<dbReference type="OrthoDB" id="439792at2759"/>
<dbReference type="PhylomeDB" id="Q8IB06"/>
<dbReference type="BRENDA" id="2.7.4.3">
    <property type="organism ID" value="4889"/>
</dbReference>
<dbReference type="Reactome" id="R-PFA-499943">
    <property type="pathway name" value="Interconversion of nucleotide di- and triphosphates"/>
</dbReference>
<dbReference type="Proteomes" id="UP000001450">
    <property type="component" value="Chromosome 8"/>
</dbReference>
<dbReference type="GO" id="GO:0016020">
    <property type="term" value="C:membrane"/>
    <property type="evidence" value="ECO:0007669"/>
    <property type="project" value="UniProtKB-KW"/>
</dbReference>
<dbReference type="GO" id="GO:0020005">
    <property type="term" value="C:symbiont-containing vacuole membrane"/>
    <property type="evidence" value="ECO:0000314"/>
    <property type="project" value="GeneDB"/>
</dbReference>
<dbReference type="GO" id="GO:0004017">
    <property type="term" value="F:adenylate kinase activity"/>
    <property type="evidence" value="ECO:0007669"/>
    <property type="project" value="UniProtKB-EC"/>
</dbReference>
<dbReference type="GO" id="GO:0005524">
    <property type="term" value="F:ATP binding"/>
    <property type="evidence" value="ECO:0007669"/>
    <property type="project" value="UniProtKB-KW"/>
</dbReference>
<dbReference type="CDD" id="cd01428">
    <property type="entry name" value="ADK"/>
    <property type="match status" value="1"/>
</dbReference>
<dbReference type="FunFam" id="3.40.50.300:FF:002084">
    <property type="entry name" value="Adenylate kinase 2"/>
    <property type="match status" value="1"/>
</dbReference>
<dbReference type="Gene3D" id="3.40.50.300">
    <property type="entry name" value="P-loop containing nucleotide triphosphate hydrolases"/>
    <property type="match status" value="1"/>
</dbReference>
<dbReference type="InterPro" id="IPR000850">
    <property type="entry name" value="Adenylat/UMP-CMP_kin"/>
</dbReference>
<dbReference type="InterPro" id="IPR027417">
    <property type="entry name" value="P-loop_NTPase"/>
</dbReference>
<dbReference type="PANTHER" id="PTHR23359">
    <property type="entry name" value="NUCLEOTIDE KINASE"/>
    <property type="match status" value="1"/>
</dbReference>
<dbReference type="Pfam" id="PF00406">
    <property type="entry name" value="ADK"/>
    <property type="match status" value="1"/>
</dbReference>
<dbReference type="PRINTS" id="PR00094">
    <property type="entry name" value="ADENYLTKNASE"/>
</dbReference>
<dbReference type="SUPFAM" id="SSF52540">
    <property type="entry name" value="P-loop containing nucleoside triphosphate hydrolases"/>
    <property type="match status" value="1"/>
</dbReference>
<name>KAD2_PLAF7</name>
<accession>Q8IB06</accession>
<accession>Q14EL6</accession>
<comment type="function">
    <text evidence="3">Catalyzes the reversible transfer of the terminal phosphate group between ATP and AMP (PubMed:18973776). Has very low activity with CTP, GTP, ITP and UTP and no activity with GMP, UMP or IMP in vitro (PubMed:18973776).</text>
</comment>
<comment type="catalytic activity">
    <reaction evidence="3">
        <text>AMP + ATP = 2 ADP</text>
        <dbReference type="Rhea" id="RHEA:12973"/>
        <dbReference type="ChEBI" id="CHEBI:30616"/>
        <dbReference type="ChEBI" id="CHEBI:456215"/>
        <dbReference type="ChEBI" id="CHEBI:456216"/>
        <dbReference type="EC" id="2.7.4.3"/>
    </reaction>
</comment>
<comment type="biophysicochemical properties">
    <kinetics>
        <KM evidence="3">290 uM for AMP (at 25 degrees Celsius and pH 7.6)</KM>
        <KM evidence="3">75 uM for ATP (at 25 degrees Celsius and pH 7.6)</KM>
        <Vmax evidence="3">10.0 umol/min/mg enzyme (at 25 degrees Celsius and pH 7.6)</Vmax>
        <text evidence="3">kcat is 5.4 sec(-1) (at 25 degrees Celsius and pH 7.6).</text>
    </kinetics>
    <phDependence>
        <text evidence="3">Optimum pH is 8.</text>
    </phDependence>
</comment>
<comment type="subunit">
    <text evidence="3">Monomer (PubMed:18973776). Oligomer (PubMed:18973776). Heterodimer composed of NMT and AK2; AK2 myristoylation stabilizes the complex (PubMed:18973776).</text>
</comment>
<comment type="subcellular location">
    <subcellularLocation>
        <location evidence="4">Parasitophorous vacuole membrane</location>
        <topology evidence="4">Lipid-anchor</topology>
    </subcellularLocation>
    <text evidence="4">Localizes to the vacuolar side of the parasitophorous vacuole.</text>
</comment>
<comment type="PTM">
    <text evidence="4">Myristoylation is required for cell membrane localization.</text>
</comment>
<comment type="PTM">
    <text evidence="4">May be palmitoylated at Cys-4 which stabilizes cell membrane localization of the myristoylated protein.</text>
</comment>
<comment type="similarity">
    <text evidence="2">Belongs to the adenylate kinase family.</text>
</comment>
<evidence type="ECO:0000250" key="1">
    <source>
        <dbReference type="UniProtKB" id="P00568"/>
    </source>
</evidence>
<evidence type="ECO:0000255" key="2">
    <source>
        <dbReference type="RuleBase" id="RU003330"/>
    </source>
</evidence>
<evidence type="ECO:0000269" key="3">
    <source>
    </source>
</evidence>
<evidence type="ECO:0000269" key="4">
    <source>
    </source>
</evidence>
<evidence type="ECO:0000303" key="5">
    <source>
    </source>
</evidence>
<evidence type="ECO:0000305" key="6"/>
<evidence type="ECO:0000305" key="7">
    <source>
    </source>
</evidence>
<evidence type="ECO:0000312" key="8">
    <source>
        <dbReference type="EMBL" id="AAV83966.1"/>
    </source>
</evidence>
<evidence type="ECO:0000312" key="9">
    <source>
        <dbReference type="EMBL" id="CAD51204.1"/>
    </source>
</evidence>
<evidence type="ECO:0000312" key="10">
    <source>
        <dbReference type="Proteomes" id="UP000001450"/>
    </source>
</evidence>
<reference evidence="8" key="1">
    <citation type="journal article" date="2009" name="Mol. Biochem. Parasitol.">
        <title>Myristoylated adenylate kinase-2 of Plasmodium falciparum forms a heterodimer with myristoyltransferase.</title>
        <authorList>
            <person name="Rahlfs S."/>
            <person name="Koncarevic S."/>
            <person name="Iozef R."/>
            <person name="Mailu B.M."/>
            <person name="Savvides S.N."/>
            <person name="Schirmer R.H."/>
            <person name="Becker K."/>
        </authorList>
    </citation>
    <scope>NUCLEOTIDE SEQUENCE [MRNA]</scope>
    <scope>FUNCTION</scope>
    <scope>CATALYTIC ACTIVITY</scope>
    <scope>BIOPHYSICOCHEMICAL PROPERTIES</scope>
    <scope>SUBUNIT</scope>
    <scope>INTERACTION WITH NMT</scope>
    <scope>MYRISTOYLATION AT GLY-2</scope>
    <scope>MUTAGENESIS OF 2-GLY--ILE-33; ASP-43; ILE-57 AND ASN-125</scope>
</reference>
<reference evidence="10" key="2">
    <citation type="journal article" date="2002" name="Nature">
        <title>Genome sequence of the human malaria parasite Plasmodium falciparum.</title>
        <authorList>
            <person name="Gardner M.J."/>
            <person name="Hall N."/>
            <person name="Fung E."/>
            <person name="White O."/>
            <person name="Berriman M."/>
            <person name="Hyman R.W."/>
            <person name="Carlton J.M."/>
            <person name="Pain A."/>
            <person name="Nelson K.E."/>
            <person name="Bowman S."/>
            <person name="Paulsen I.T."/>
            <person name="James K.D."/>
            <person name="Eisen J.A."/>
            <person name="Rutherford K.M."/>
            <person name="Salzberg S.L."/>
            <person name="Craig A."/>
            <person name="Kyes S."/>
            <person name="Chan M.-S."/>
            <person name="Nene V."/>
            <person name="Shallom S.J."/>
            <person name="Suh B."/>
            <person name="Peterson J."/>
            <person name="Angiuoli S."/>
            <person name="Pertea M."/>
            <person name="Allen J."/>
            <person name="Selengut J."/>
            <person name="Haft D."/>
            <person name="Mather M.W."/>
            <person name="Vaidya A.B."/>
            <person name="Martin D.M.A."/>
            <person name="Fairlamb A.H."/>
            <person name="Fraunholz M.J."/>
            <person name="Roos D.S."/>
            <person name="Ralph S.A."/>
            <person name="McFadden G.I."/>
            <person name="Cummings L.M."/>
            <person name="Subramanian G.M."/>
            <person name="Mungall C."/>
            <person name="Venter J.C."/>
            <person name="Carucci D.J."/>
            <person name="Hoffman S.L."/>
            <person name="Newbold C."/>
            <person name="Davis R.W."/>
            <person name="Fraser C.M."/>
            <person name="Barrell B.G."/>
        </authorList>
    </citation>
    <scope>NUCLEOTIDE SEQUENCE [LARGE SCALE GENOMIC DNA]</scope>
    <source>
        <strain evidence="10">3D7</strain>
    </source>
</reference>
<reference evidence="10" key="3">
    <citation type="journal article" date="2002" name="Nature">
        <title>Sequence of Plasmodium falciparum chromosomes 1, 3-9 and 13.</title>
        <authorList>
            <person name="Hall N."/>
            <person name="Pain A."/>
            <person name="Berriman M."/>
            <person name="Churcher C.M."/>
            <person name="Harris B."/>
            <person name="Harris D."/>
            <person name="Mungall K.L."/>
            <person name="Bowman S."/>
            <person name="Atkin R."/>
            <person name="Baker S."/>
            <person name="Barron A."/>
            <person name="Brooks K."/>
            <person name="Buckee C.O."/>
            <person name="Burrows C."/>
            <person name="Cherevach I."/>
            <person name="Chillingworth C."/>
            <person name="Chillingworth T."/>
            <person name="Christodoulou Z."/>
            <person name="Clark L."/>
            <person name="Clark R."/>
            <person name="Corton C."/>
            <person name="Cronin A."/>
            <person name="Davies R.M."/>
            <person name="Davis P."/>
            <person name="Dear P."/>
            <person name="Dearden F."/>
            <person name="Doggett J."/>
            <person name="Feltwell T."/>
            <person name="Goble A."/>
            <person name="Goodhead I."/>
            <person name="Gwilliam R."/>
            <person name="Hamlin N."/>
            <person name="Hance Z."/>
            <person name="Harper D."/>
            <person name="Hauser H."/>
            <person name="Hornsby T."/>
            <person name="Holroyd S."/>
            <person name="Horrocks P."/>
            <person name="Humphray S."/>
            <person name="Jagels K."/>
            <person name="James K.D."/>
            <person name="Johnson D."/>
            <person name="Kerhornou A."/>
            <person name="Knights A."/>
            <person name="Konfortov B."/>
            <person name="Kyes S."/>
            <person name="Larke N."/>
            <person name="Lawson D."/>
            <person name="Lennard N."/>
            <person name="Line A."/>
            <person name="Maddison M."/>
            <person name="Mclean J."/>
            <person name="Mooney P."/>
            <person name="Moule S."/>
            <person name="Murphy L."/>
            <person name="Oliver K."/>
            <person name="Ormond D."/>
            <person name="Price C."/>
            <person name="Quail M.A."/>
            <person name="Rabbinowitsch E."/>
            <person name="Rajandream M.A."/>
            <person name="Rutter S."/>
            <person name="Rutherford K.M."/>
            <person name="Sanders M."/>
            <person name="Simmonds M."/>
            <person name="Seeger K."/>
            <person name="Sharp S."/>
            <person name="Smith R."/>
            <person name="Squares R."/>
            <person name="Squares S."/>
            <person name="Stevens K."/>
            <person name="Taylor K."/>
            <person name="Tivey A."/>
            <person name="Unwin L."/>
            <person name="Whitehead S."/>
            <person name="Woodward J.R."/>
            <person name="Sulston J.E."/>
            <person name="Craig A."/>
            <person name="Newbold C."/>
            <person name="Barrell B.G."/>
        </authorList>
    </citation>
    <scope>NUCLEOTIDE SEQUENCE [LARGE SCALE GENOMIC DNA]</scope>
    <source>
        <strain evidence="10">3D7</strain>
    </source>
</reference>
<reference evidence="6" key="4">
    <citation type="journal article" date="2015" name="PLoS ONE">
        <title>Alternative Protein Secretion in the Malaria Parasite Plasmodium falciparum.</title>
        <authorList>
            <person name="Thavayogarajah T."/>
            <person name="Gangopadhyay P."/>
            <person name="Rahlfs S."/>
            <person name="Becker K."/>
            <person name="Lingelbach K."/>
            <person name="Przyborski J.M."/>
            <person name="Holder A.A."/>
        </authorList>
    </citation>
    <scope>SUBCELLULAR LOCATION</scope>
    <scope>MYRISTOYLATION AT GLY-2</scope>
    <scope>PALMITOYLATION</scope>
    <scope>MUTAGENESIS OF GLY-2; CYS-4 AND 21-LYS--LYS-30</scope>
</reference>
<feature type="initiator methionine" description="Removed" evidence="6">
    <location>
        <position position="1"/>
    </location>
</feature>
<feature type="chain" id="PRO_0000455420" description="Adenylate kinase 2">
    <location>
        <begin position="2"/>
        <end position="275"/>
    </location>
</feature>
<feature type="region of interest" description="Required for cell membrane translocation but dispensable for cell membrane localization" evidence="4">
    <location>
        <begin position="21"/>
        <end position="30"/>
    </location>
</feature>
<feature type="region of interest" description="NMP" evidence="1">
    <location>
        <begin position="59"/>
        <end position="97"/>
    </location>
</feature>
<feature type="region of interest" description="LID" evidence="1">
    <location>
        <begin position="165"/>
        <end position="214"/>
    </location>
</feature>
<feature type="binding site" evidence="1">
    <location>
        <begin position="39"/>
        <end position="44"/>
    </location>
    <ligand>
        <name>ATP</name>
        <dbReference type="ChEBI" id="CHEBI:30616"/>
    </ligand>
</feature>
<feature type="binding site" evidence="1">
    <location>
        <begin position="95"/>
        <end position="97"/>
    </location>
    <ligand>
        <name>AMP</name>
        <dbReference type="ChEBI" id="CHEBI:456215"/>
    </ligand>
</feature>
<feature type="binding site" evidence="1">
    <location>
        <begin position="126"/>
        <end position="129"/>
    </location>
    <ligand>
        <name>AMP</name>
        <dbReference type="ChEBI" id="CHEBI:456215"/>
    </ligand>
</feature>
<feature type="binding site" evidence="1">
    <location>
        <position position="133"/>
    </location>
    <ligand>
        <name>AMP</name>
        <dbReference type="ChEBI" id="CHEBI:456215"/>
    </ligand>
</feature>
<feature type="binding site" evidence="1">
    <location>
        <position position="164"/>
    </location>
    <ligand>
        <name>ATP</name>
        <dbReference type="ChEBI" id="CHEBI:30616"/>
    </ligand>
</feature>
<feature type="binding site" evidence="1">
    <location>
        <position position="220"/>
    </location>
    <ligand>
        <name>AMP</name>
        <dbReference type="ChEBI" id="CHEBI:456215"/>
    </ligand>
</feature>
<feature type="binding site" evidence="1">
    <location>
        <position position="231"/>
    </location>
    <ligand>
        <name>AMP</name>
        <dbReference type="ChEBI" id="CHEBI:456215"/>
    </ligand>
</feature>
<feature type="lipid moiety-binding region" description="N-myristoyl glycine" evidence="3 7">
    <location>
        <position position="2"/>
    </location>
</feature>
<feature type="mutagenesis site" description="No effect on catalytic activity." evidence="3">
    <location>
        <begin position="2"/>
        <end position="33"/>
    </location>
</feature>
<feature type="mutagenesis site" description="Mislocalizes to the cytoplasm. Mislocalizes to the cytoplasm; when associated with A-4." evidence="4">
    <original>G</original>
    <variation>A</variation>
    <location>
        <position position="2"/>
    </location>
</feature>
<feature type="mutagenesis site" description="Partial mislocalization to the cytoplasm with some localization to the cell membrane. Mislocalizes to the cytoplasm; when associated with A-2." evidence="4">
    <original>C</original>
    <variation>A</variation>
    <location>
        <position position="4"/>
    </location>
</feature>
<feature type="mutagenesis site" description="Remains associated with the cytoplasmic side of the cell membrane with no translocation across the cell membrane." evidence="4">
    <location>
        <begin position="21"/>
        <end position="30"/>
    </location>
</feature>
<feature type="mutagenesis site" description="Loss of catalytic activity." evidence="3">
    <original>D</original>
    <variation>G</variation>
    <location>
        <position position="43"/>
    </location>
</feature>
<feature type="mutagenesis site" description="Loss of catalytic activity." evidence="3">
    <original>I</original>
    <variation>H</variation>
    <location>
        <position position="57"/>
    </location>
</feature>
<feature type="mutagenesis site" description="36% decrease in catalytic activity." evidence="3">
    <original>N</original>
    <variation>D</variation>
    <location>
        <position position="125"/>
    </location>
</feature>
<keyword id="KW-0067">ATP-binding</keyword>
<keyword id="KW-0418">Kinase</keyword>
<keyword id="KW-0449">Lipoprotein</keyword>
<keyword id="KW-0472">Membrane</keyword>
<keyword id="KW-0519">Myristate</keyword>
<keyword id="KW-0547">Nucleotide-binding</keyword>
<keyword id="KW-0564">Palmitate</keyword>
<keyword id="KW-1185">Reference proteome</keyword>
<keyword id="KW-0808">Transferase</keyword>
<organism evidence="10">
    <name type="scientific">Plasmodium falciparum (isolate 3D7)</name>
    <dbReference type="NCBI Taxonomy" id="36329"/>
    <lineage>
        <taxon>Eukaryota</taxon>
        <taxon>Sar</taxon>
        <taxon>Alveolata</taxon>
        <taxon>Apicomplexa</taxon>
        <taxon>Aconoidasida</taxon>
        <taxon>Haemosporida</taxon>
        <taxon>Plasmodiidae</taxon>
        <taxon>Plasmodium</taxon>
        <taxon>Plasmodium (Laverania)</taxon>
    </lineage>
</organism>
<sequence>MGSCYSRKNKVSTISLDEEEKKKEKKKKKKIYILNGASGSGKDTQCRLLEKKYNYKIICISKLLKEYKEEYNKENVLNEEENYFDEIEKCMIDGSLVNDQIVIEIFHKQLNKYINDDKYNGIIINGFPRNYEQALLIIQNNISITKFINIQVGKDTLWTRINNRIIDPITNISYNENIIQIIKKKREGQELSDKEQKQLIIDNHLYNNLSNDILERLTKRKDDEEQVFNKRFQLYIESEQKINSLFKNICKNVDGEKSINDIFDQICSIIDDNPN</sequence>
<gene>
    <name evidence="5" type="primary">AK2</name>
    <name evidence="9" type="ORF">PF3D7_0816900</name>
</gene>
<proteinExistence type="evidence at protein level"/>